<comment type="function">
    <text evidence="1">Together with its co-chaperonin GroES, plays an essential role in assisting protein folding. The GroEL-GroES system forms a nano-cage that allows encapsulation of the non-native substrate proteins and provides a physical environment optimized to promote and accelerate protein folding.</text>
</comment>
<comment type="catalytic activity">
    <reaction evidence="1">
        <text>ATP + H2O + a folded polypeptide = ADP + phosphate + an unfolded polypeptide.</text>
        <dbReference type="EC" id="5.6.1.7"/>
    </reaction>
</comment>
<comment type="subunit">
    <text evidence="1">Forms a cylinder of 14 subunits composed of two heptameric rings stacked back-to-back. Interacts with the co-chaperonin GroES.</text>
</comment>
<comment type="subcellular location">
    <subcellularLocation>
        <location evidence="1">Cytoplasm</location>
    </subcellularLocation>
</comment>
<comment type="similarity">
    <text evidence="1">Belongs to the chaperonin (HSP60) family.</text>
</comment>
<name>CH60_METVS</name>
<organism>
    <name type="scientific">Methanococcus vannielii (strain ATCC 35089 / DSM 1224 / JCM 13029 / OCM 148 / SB)</name>
    <dbReference type="NCBI Taxonomy" id="406327"/>
    <lineage>
        <taxon>Archaea</taxon>
        <taxon>Methanobacteriati</taxon>
        <taxon>Methanobacteriota</taxon>
        <taxon>Methanomada group</taxon>
        <taxon>Methanococci</taxon>
        <taxon>Methanococcales</taxon>
        <taxon>Methanococcaceae</taxon>
        <taxon>Methanococcus</taxon>
    </lineage>
</organism>
<gene>
    <name evidence="1" type="primary">groEL</name>
    <name evidence="1" type="synonym">groL</name>
    <name type="ordered locus">Mevan_0224</name>
</gene>
<reference key="1">
    <citation type="submission" date="2007-06" db="EMBL/GenBank/DDBJ databases">
        <title>Complete sequence of Methanococcus vannielii SB.</title>
        <authorList>
            <consortium name="US DOE Joint Genome Institute"/>
            <person name="Copeland A."/>
            <person name="Lucas S."/>
            <person name="Lapidus A."/>
            <person name="Barry K."/>
            <person name="Glavina del Rio T."/>
            <person name="Dalin E."/>
            <person name="Tice H."/>
            <person name="Pitluck S."/>
            <person name="Chain P."/>
            <person name="Malfatti S."/>
            <person name="Shin M."/>
            <person name="Vergez L."/>
            <person name="Schmutz J."/>
            <person name="Larimer F."/>
            <person name="Land M."/>
            <person name="Hauser L."/>
            <person name="Kyrpides N."/>
            <person name="Anderson I."/>
            <person name="Sieprawska-Lupa M."/>
            <person name="Whitman W.B."/>
            <person name="Richardson P."/>
        </authorList>
    </citation>
    <scope>NUCLEOTIDE SEQUENCE [LARGE SCALE GENOMIC DNA]</scope>
    <source>
        <strain>ATCC 35089 / DSM 1224 / JCM 13029 / OCM 148 / SB</strain>
    </source>
</reference>
<proteinExistence type="inferred from homology"/>
<protein>
    <recommendedName>
        <fullName evidence="1">Chaperonin GroEL</fullName>
        <ecNumber evidence="1">5.6.1.7</ecNumber>
    </recommendedName>
    <alternativeName>
        <fullName evidence="1">60 kDa chaperonin</fullName>
    </alternativeName>
    <alternativeName>
        <fullName evidence="1">Chaperonin-60</fullName>
        <shortName evidence="1">Cpn60</shortName>
    </alternativeName>
</protein>
<accession>A6UNR2</accession>
<evidence type="ECO:0000255" key="1">
    <source>
        <dbReference type="HAMAP-Rule" id="MF_00600"/>
    </source>
</evidence>
<keyword id="KW-0067">ATP-binding</keyword>
<keyword id="KW-0143">Chaperone</keyword>
<keyword id="KW-0963">Cytoplasm</keyword>
<keyword id="KW-0413">Isomerase</keyword>
<keyword id="KW-0547">Nucleotide-binding</keyword>
<sequence length="536" mass="57338">MAKIIKFNEEARKKLENGVDVLSNTVKVTLGPKGRNVVIEKSYGSPLITNDGVTIAKEIELEDPFENMGAQLIKEVATKANDVAGDGTTTATVLAQAMVKEGLKMITAGSNPVFVKRGIEKATKKAVSILETKSKKIAGNSEIAQVASISAGDEEIGNLIAKAMEKVGENGVITVEEAKSLETTLEVVEGMQFDKGYISSYLVTDPERMTAELDDPYILITDKKISNMKEILPVLEATARSSRPLLIIAEDIEGDVLTTLVVNKLRGTLNVVGVKAPYFGDKRIGALEDIAILTSSQVISKDKGMELEKVDISSLGSAKKVKVTKDNTLIIGGIGKEKDITSRISQIKTQISSTTSEYEKDSLKERLAKLSGGVAVIKVGSATETELKEKKLRIEDALNATKAAIEEGIVSGGGTVLIEILKEMESFELSGEERIGVNIVKKALTAPLKQIAENAGLEGSIVVEKVKNAESGIGFDAAKEEYVDMIKSGIIDPAKVTRSALQNSASVAALVLTTEAIIVDKPKKEESDTPNMPMMM</sequence>
<dbReference type="EC" id="5.6.1.7" evidence="1"/>
<dbReference type="EMBL" id="CP000742">
    <property type="protein sequence ID" value="ABR54134.1"/>
    <property type="molecule type" value="Genomic_DNA"/>
</dbReference>
<dbReference type="RefSeq" id="WP_011972037.1">
    <property type="nucleotide sequence ID" value="NC_009634.1"/>
</dbReference>
<dbReference type="SMR" id="A6UNR2"/>
<dbReference type="STRING" id="406327.Mevan_0224"/>
<dbReference type="GeneID" id="5324992"/>
<dbReference type="KEGG" id="mvn:Mevan_0224"/>
<dbReference type="eggNOG" id="arCOG05154">
    <property type="taxonomic scope" value="Archaea"/>
</dbReference>
<dbReference type="HOGENOM" id="CLU_016503_3_0_2"/>
<dbReference type="OrthoDB" id="106945at2157"/>
<dbReference type="Proteomes" id="UP000001107">
    <property type="component" value="Chromosome"/>
</dbReference>
<dbReference type="GO" id="GO:0005737">
    <property type="term" value="C:cytoplasm"/>
    <property type="evidence" value="ECO:0007669"/>
    <property type="project" value="UniProtKB-SubCell"/>
</dbReference>
<dbReference type="GO" id="GO:0005524">
    <property type="term" value="F:ATP binding"/>
    <property type="evidence" value="ECO:0007669"/>
    <property type="project" value="UniProtKB-UniRule"/>
</dbReference>
<dbReference type="GO" id="GO:0140662">
    <property type="term" value="F:ATP-dependent protein folding chaperone"/>
    <property type="evidence" value="ECO:0007669"/>
    <property type="project" value="InterPro"/>
</dbReference>
<dbReference type="GO" id="GO:0016853">
    <property type="term" value="F:isomerase activity"/>
    <property type="evidence" value="ECO:0007669"/>
    <property type="project" value="UniProtKB-KW"/>
</dbReference>
<dbReference type="GO" id="GO:0051082">
    <property type="term" value="F:unfolded protein binding"/>
    <property type="evidence" value="ECO:0007669"/>
    <property type="project" value="UniProtKB-UniRule"/>
</dbReference>
<dbReference type="GO" id="GO:0042026">
    <property type="term" value="P:protein refolding"/>
    <property type="evidence" value="ECO:0007669"/>
    <property type="project" value="UniProtKB-UniRule"/>
</dbReference>
<dbReference type="CDD" id="cd03344">
    <property type="entry name" value="GroEL"/>
    <property type="match status" value="1"/>
</dbReference>
<dbReference type="FunFam" id="3.50.7.10:FF:000001">
    <property type="entry name" value="60 kDa chaperonin"/>
    <property type="match status" value="1"/>
</dbReference>
<dbReference type="Gene3D" id="3.50.7.10">
    <property type="entry name" value="GroEL"/>
    <property type="match status" value="1"/>
</dbReference>
<dbReference type="Gene3D" id="1.10.560.10">
    <property type="entry name" value="GroEL-like equatorial domain"/>
    <property type="match status" value="1"/>
</dbReference>
<dbReference type="Gene3D" id="3.30.260.10">
    <property type="entry name" value="TCP-1-like chaperonin intermediate domain"/>
    <property type="match status" value="1"/>
</dbReference>
<dbReference type="HAMAP" id="MF_00600">
    <property type="entry name" value="CH60"/>
    <property type="match status" value="1"/>
</dbReference>
<dbReference type="InterPro" id="IPR018370">
    <property type="entry name" value="Chaperonin_Cpn60_CS"/>
</dbReference>
<dbReference type="InterPro" id="IPR001844">
    <property type="entry name" value="Cpn60/GroEL"/>
</dbReference>
<dbReference type="InterPro" id="IPR002423">
    <property type="entry name" value="Cpn60/GroEL/TCP-1"/>
</dbReference>
<dbReference type="InterPro" id="IPR027409">
    <property type="entry name" value="GroEL-like_apical_dom_sf"/>
</dbReference>
<dbReference type="InterPro" id="IPR027413">
    <property type="entry name" value="GROEL-like_equatorial_sf"/>
</dbReference>
<dbReference type="InterPro" id="IPR027410">
    <property type="entry name" value="TCP-1-like_intermed_sf"/>
</dbReference>
<dbReference type="NCBIfam" id="TIGR02348">
    <property type="entry name" value="GroEL"/>
    <property type="match status" value="1"/>
</dbReference>
<dbReference type="NCBIfam" id="NF000592">
    <property type="entry name" value="PRK00013.1"/>
    <property type="match status" value="1"/>
</dbReference>
<dbReference type="NCBIfam" id="NF009487">
    <property type="entry name" value="PRK12849.1"/>
    <property type="match status" value="1"/>
</dbReference>
<dbReference type="NCBIfam" id="NF009488">
    <property type="entry name" value="PRK12850.1"/>
    <property type="match status" value="1"/>
</dbReference>
<dbReference type="NCBIfam" id="NF009489">
    <property type="entry name" value="PRK12851.1"/>
    <property type="match status" value="1"/>
</dbReference>
<dbReference type="PANTHER" id="PTHR45633">
    <property type="entry name" value="60 KDA HEAT SHOCK PROTEIN, MITOCHONDRIAL"/>
    <property type="match status" value="1"/>
</dbReference>
<dbReference type="Pfam" id="PF00118">
    <property type="entry name" value="Cpn60_TCP1"/>
    <property type="match status" value="1"/>
</dbReference>
<dbReference type="PRINTS" id="PR00298">
    <property type="entry name" value="CHAPERONIN60"/>
</dbReference>
<dbReference type="SUPFAM" id="SSF52029">
    <property type="entry name" value="GroEL apical domain-like"/>
    <property type="match status" value="1"/>
</dbReference>
<dbReference type="SUPFAM" id="SSF48592">
    <property type="entry name" value="GroEL equatorial domain-like"/>
    <property type="match status" value="2"/>
</dbReference>
<dbReference type="PROSITE" id="PS00296">
    <property type="entry name" value="CHAPERONINS_CPN60"/>
    <property type="match status" value="1"/>
</dbReference>
<feature type="chain" id="PRO_0000332101" description="Chaperonin GroEL">
    <location>
        <begin position="1"/>
        <end position="536"/>
    </location>
</feature>
<feature type="binding site" evidence="1">
    <location>
        <begin position="29"/>
        <end position="32"/>
    </location>
    <ligand>
        <name>ATP</name>
        <dbReference type="ChEBI" id="CHEBI:30616"/>
    </ligand>
</feature>
<feature type="binding site" evidence="1">
    <location>
        <begin position="86"/>
        <end position="90"/>
    </location>
    <ligand>
        <name>ATP</name>
        <dbReference type="ChEBI" id="CHEBI:30616"/>
    </ligand>
</feature>
<feature type="binding site" evidence="1">
    <location>
        <position position="413"/>
    </location>
    <ligand>
        <name>ATP</name>
        <dbReference type="ChEBI" id="CHEBI:30616"/>
    </ligand>
</feature>
<feature type="binding site" evidence="1">
    <location>
        <begin position="476"/>
        <end position="478"/>
    </location>
    <ligand>
        <name>ATP</name>
        <dbReference type="ChEBI" id="CHEBI:30616"/>
    </ligand>
</feature>
<feature type="binding site" evidence="1">
    <location>
        <position position="492"/>
    </location>
    <ligand>
        <name>ATP</name>
        <dbReference type="ChEBI" id="CHEBI:30616"/>
    </ligand>
</feature>